<keyword id="KW-1003">Cell membrane</keyword>
<keyword id="KW-0444">Lipid biosynthesis</keyword>
<keyword id="KW-0443">Lipid metabolism</keyword>
<keyword id="KW-0472">Membrane</keyword>
<keyword id="KW-0548">Nucleotidyltransferase</keyword>
<keyword id="KW-0594">Phospholipid biosynthesis</keyword>
<keyword id="KW-1208">Phospholipid metabolism</keyword>
<keyword id="KW-1185">Reference proteome</keyword>
<keyword id="KW-0808">Transferase</keyword>
<keyword id="KW-0812">Transmembrane</keyword>
<keyword id="KW-1133">Transmembrane helix</keyword>
<organism>
    <name type="scientific">Rickettsia prowazekii (strain Madrid E)</name>
    <dbReference type="NCBI Taxonomy" id="272947"/>
    <lineage>
        <taxon>Bacteria</taxon>
        <taxon>Pseudomonadati</taxon>
        <taxon>Pseudomonadota</taxon>
        <taxon>Alphaproteobacteria</taxon>
        <taxon>Rickettsiales</taxon>
        <taxon>Rickettsiaceae</taxon>
        <taxon>Rickettsieae</taxon>
        <taxon>Rickettsia</taxon>
        <taxon>typhus group</taxon>
    </lineage>
</organism>
<accession>Q9ZDA8</accession>
<feature type="chain" id="PRO_0000090745" description="Phosphatidate cytidylyltransferase">
    <location>
        <begin position="1"/>
        <end position="228"/>
    </location>
</feature>
<feature type="transmembrane region" description="Helical" evidence="2">
    <location>
        <begin position="31"/>
        <end position="51"/>
    </location>
</feature>
<feature type="transmembrane region" description="Helical" evidence="2">
    <location>
        <begin position="65"/>
        <end position="85"/>
    </location>
</feature>
<feature type="transmembrane region" description="Helical" evidence="2">
    <location>
        <begin position="93"/>
        <end position="113"/>
    </location>
</feature>
<feature type="transmembrane region" description="Helical" evidence="2">
    <location>
        <begin position="131"/>
        <end position="151"/>
    </location>
</feature>
<feature type="transmembrane region" description="Helical" evidence="2">
    <location>
        <begin position="165"/>
        <end position="185"/>
    </location>
</feature>
<feature type="transmembrane region" description="Helical" evidence="2">
    <location>
        <begin position="206"/>
        <end position="226"/>
    </location>
</feature>
<gene>
    <name type="primary">cdsA</name>
    <name type="ordered locus">RP424</name>
</gene>
<sequence length="228" mass="25814">MITQKEKEHLAKDKQNIYLRIISGIALVSLFVIAILCLKTLFYILMILVGLGMLSEWYNMTYPSINYLLIGLIIIPIPISLLIFLSMEESNRLVIMLYFCILWSVDTFAMIGGKTFKGIKLAPKISPKKTWTGLITGTVSAGLVSVLVSLIPNYHIEHYYFSNKIYLFIISCILALIAQSSDLFISYFKRKFNIKDSGHIIPGHGGVLDRFDSIILTAPVFFCINIYL</sequence>
<reference key="1">
    <citation type="journal article" date="1998" name="Nature">
        <title>The genome sequence of Rickettsia prowazekii and the origin of mitochondria.</title>
        <authorList>
            <person name="Andersson S.G.E."/>
            <person name="Zomorodipour A."/>
            <person name="Andersson J.O."/>
            <person name="Sicheritz-Ponten T."/>
            <person name="Alsmark U.C.M."/>
            <person name="Podowski R.M."/>
            <person name="Naeslund A.K."/>
            <person name="Eriksson A.-S."/>
            <person name="Winkler H.H."/>
            <person name="Kurland C.G."/>
        </authorList>
    </citation>
    <scope>NUCLEOTIDE SEQUENCE [LARGE SCALE GENOMIC DNA]</scope>
    <source>
        <strain>Madrid E</strain>
    </source>
</reference>
<evidence type="ECO:0000250" key="1"/>
<evidence type="ECO:0000255" key="2"/>
<evidence type="ECO:0000305" key="3"/>
<dbReference type="EC" id="2.7.7.41"/>
<dbReference type="EMBL" id="AJ235271">
    <property type="protein sequence ID" value="CAA14881.1"/>
    <property type="molecule type" value="Genomic_DNA"/>
</dbReference>
<dbReference type="PIR" id="G71700">
    <property type="entry name" value="G71700"/>
</dbReference>
<dbReference type="RefSeq" id="NP_220805.1">
    <property type="nucleotide sequence ID" value="NC_000963.1"/>
</dbReference>
<dbReference type="RefSeq" id="WP_010886291.1">
    <property type="nucleotide sequence ID" value="NC_000963.1"/>
</dbReference>
<dbReference type="SMR" id="Q9ZDA8"/>
<dbReference type="STRING" id="272947.gene:17555504"/>
<dbReference type="EnsemblBacteria" id="CAA14881">
    <property type="protein sequence ID" value="CAA14881"/>
    <property type="gene ID" value="CAA14881"/>
</dbReference>
<dbReference type="KEGG" id="rpr:RP424"/>
<dbReference type="PATRIC" id="fig|272947.5.peg.437"/>
<dbReference type="eggNOG" id="COG0575">
    <property type="taxonomic scope" value="Bacteria"/>
</dbReference>
<dbReference type="HOGENOM" id="CLU_037294_1_1_5"/>
<dbReference type="OrthoDB" id="9799199at2"/>
<dbReference type="UniPathway" id="UPA00557">
    <property type="reaction ID" value="UER00614"/>
</dbReference>
<dbReference type="Proteomes" id="UP000002480">
    <property type="component" value="Chromosome"/>
</dbReference>
<dbReference type="GO" id="GO:0005886">
    <property type="term" value="C:plasma membrane"/>
    <property type="evidence" value="ECO:0007669"/>
    <property type="project" value="UniProtKB-SubCell"/>
</dbReference>
<dbReference type="GO" id="GO:0004605">
    <property type="term" value="F:phosphatidate cytidylyltransferase activity"/>
    <property type="evidence" value="ECO:0007669"/>
    <property type="project" value="UniProtKB-EC"/>
</dbReference>
<dbReference type="GO" id="GO:0016024">
    <property type="term" value="P:CDP-diacylglycerol biosynthetic process"/>
    <property type="evidence" value="ECO:0007669"/>
    <property type="project" value="UniProtKB-UniPathway"/>
</dbReference>
<dbReference type="InterPro" id="IPR000374">
    <property type="entry name" value="PC_trans"/>
</dbReference>
<dbReference type="PANTHER" id="PTHR46382">
    <property type="entry name" value="PHOSPHATIDATE CYTIDYLYLTRANSFERASE"/>
    <property type="match status" value="1"/>
</dbReference>
<dbReference type="PANTHER" id="PTHR46382:SF1">
    <property type="entry name" value="PHOSPHATIDATE CYTIDYLYLTRANSFERASE"/>
    <property type="match status" value="1"/>
</dbReference>
<dbReference type="Pfam" id="PF01148">
    <property type="entry name" value="CTP_transf_1"/>
    <property type="match status" value="1"/>
</dbReference>
<dbReference type="PROSITE" id="PS01315">
    <property type="entry name" value="CDS"/>
    <property type="match status" value="1"/>
</dbReference>
<name>CDSA_RICPR</name>
<protein>
    <recommendedName>
        <fullName>Phosphatidate cytidylyltransferase</fullName>
        <ecNumber>2.7.7.41</ecNumber>
    </recommendedName>
    <alternativeName>
        <fullName>CDP-DAG synthase</fullName>
    </alternativeName>
    <alternativeName>
        <fullName>CDP-DG synthase</fullName>
    </alternativeName>
    <alternativeName>
        <fullName>CDP-diacylglycerol synthase</fullName>
        <shortName>CDS</shortName>
    </alternativeName>
    <alternativeName>
        <fullName>CDP-diglyceride pyrophosphorylase</fullName>
    </alternativeName>
    <alternativeName>
        <fullName>CDP-diglyceride synthase</fullName>
    </alternativeName>
    <alternativeName>
        <fullName>CTP:phosphatidate cytidylyltransferase</fullName>
    </alternativeName>
</protein>
<proteinExistence type="inferred from homology"/>
<comment type="catalytic activity">
    <reaction>
        <text>a 1,2-diacyl-sn-glycero-3-phosphate + CTP + H(+) = a CDP-1,2-diacyl-sn-glycerol + diphosphate</text>
        <dbReference type="Rhea" id="RHEA:16229"/>
        <dbReference type="ChEBI" id="CHEBI:15378"/>
        <dbReference type="ChEBI" id="CHEBI:33019"/>
        <dbReference type="ChEBI" id="CHEBI:37563"/>
        <dbReference type="ChEBI" id="CHEBI:58332"/>
        <dbReference type="ChEBI" id="CHEBI:58608"/>
        <dbReference type="EC" id="2.7.7.41"/>
    </reaction>
</comment>
<comment type="pathway">
    <text>Phospholipid metabolism; CDP-diacylglycerol biosynthesis; CDP-diacylglycerol from sn-glycerol 3-phosphate: step 3/3.</text>
</comment>
<comment type="subcellular location">
    <subcellularLocation>
        <location evidence="1">Cell membrane</location>
        <topology evidence="1">Multi-pass membrane protein</topology>
    </subcellularLocation>
</comment>
<comment type="similarity">
    <text evidence="3">Belongs to the CDS family.</text>
</comment>